<gene>
    <name evidence="1" type="primary">rpl29</name>
    <name type="ordered locus">Saci_0590</name>
</gene>
<sequence>MPLEVDELRKMDLKQLKERLNELEMQLLKLRVESRMGTLKNTASIKNTRKDIARILTVIGEKSKKEAKK</sequence>
<protein>
    <recommendedName>
        <fullName evidence="1">Large ribosomal subunit protein uL29</fullName>
    </recommendedName>
    <alternativeName>
        <fullName evidence="2">50S ribosomal protein L29</fullName>
    </alternativeName>
</protein>
<dbReference type="EMBL" id="CP000077">
    <property type="protein sequence ID" value="AAY79982.1"/>
    <property type="molecule type" value="Genomic_DNA"/>
</dbReference>
<dbReference type="RefSeq" id="WP_011277484.1">
    <property type="nucleotide sequence ID" value="NC_007181.1"/>
</dbReference>
<dbReference type="PDB" id="8HKU">
    <property type="method" value="EM"/>
    <property type="resolution" value="2.72 A"/>
    <property type="chains" value="L29P=2-64"/>
</dbReference>
<dbReference type="PDB" id="8HKV">
    <property type="method" value="EM"/>
    <property type="resolution" value="4.94 A"/>
    <property type="chains" value="L29P=2-64"/>
</dbReference>
<dbReference type="PDB" id="8HKY">
    <property type="method" value="EM"/>
    <property type="resolution" value="4.45 A"/>
    <property type="chains" value="L29P=2-64"/>
</dbReference>
<dbReference type="PDB" id="8HKZ">
    <property type="method" value="EM"/>
    <property type="resolution" value="4.78 A"/>
    <property type="chains" value="L29P=2-64"/>
</dbReference>
<dbReference type="PDB" id="8HL1">
    <property type="method" value="EM"/>
    <property type="resolution" value="3.93 A"/>
    <property type="chains" value="L29P=2-64"/>
</dbReference>
<dbReference type="PDB" id="8HL2">
    <property type="method" value="EM"/>
    <property type="resolution" value="4.10 A"/>
    <property type="chains" value="L29P=2-64"/>
</dbReference>
<dbReference type="PDB" id="8HL3">
    <property type="method" value="EM"/>
    <property type="resolution" value="4.80 A"/>
    <property type="chains" value="L29P=2-64"/>
</dbReference>
<dbReference type="PDB" id="8HL4">
    <property type="method" value="EM"/>
    <property type="resolution" value="4.62 A"/>
    <property type="chains" value="L29P=2-64"/>
</dbReference>
<dbReference type="PDB" id="8HL5">
    <property type="method" value="EM"/>
    <property type="resolution" value="5.72 A"/>
    <property type="chains" value="L29P=2-64"/>
</dbReference>
<dbReference type="PDBsum" id="8HKU"/>
<dbReference type="PDBsum" id="8HKV"/>
<dbReference type="PDBsum" id="8HKY"/>
<dbReference type="PDBsum" id="8HKZ"/>
<dbReference type="PDBsum" id="8HL1"/>
<dbReference type="PDBsum" id="8HL2"/>
<dbReference type="PDBsum" id="8HL3"/>
<dbReference type="PDBsum" id="8HL4"/>
<dbReference type="PDBsum" id="8HL5"/>
<dbReference type="EMDB" id="EMD-34860"/>
<dbReference type="EMDB" id="EMD-34861"/>
<dbReference type="EMDB" id="EMD-34863"/>
<dbReference type="EMDB" id="EMD-34864"/>
<dbReference type="EMDB" id="EMD-34866"/>
<dbReference type="EMDB" id="EMD-34867"/>
<dbReference type="EMDB" id="EMD-34868"/>
<dbReference type="EMDB" id="EMD-34869"/>
<dbReference type="EMDB" id="EMD-34870"/>
<dbReference type="SMR" id="Q4JB47"/>
<dbReference type="STRING" id="330779.Saci_0590"/>
<dbReference type="GeneID" id="14551111"/>
<dbReference type="KEGG" id="sai:Saci_0590"/>
<dbReference type="PATRIC" id="fig|330779.12.peg.569"/>
<dbReference type="eggNOG" id="arCOG00785">
    <property type="taxonomic scope" value="Archaea"/>
</dbReference>
<dbReference type="HOGENOM" id="CLU_158491_2_0_2"/>
<dbReference type="Proteomes" id="UP000001018">
    <property type="component" value="Chromosome"/>
</dbReference>
<dbReference type="GO" id="GO:1990904">
    <property type="term" value="C:ribonucleoprotein complex"/>
    <property type="evidence" value="ECO:0007669"/>
    <property type="project" value="UniProtKB-KW"/>
</dbReference>
<dbReference type="GO" id="GO:0005840">
    <property type="term" value="C:ribosome"/>
    <property type="evidence" value="ECO:0007669"/>
    <property type="project" value="UniProtKB-KW"/>
</dbReference>
<dbReference type="GO" id="GO:0003735">
    <property type="term" value="F:structural constituent of ribosome"/>
    <property type="evidence" value="ECO:0007669"/>
    <property type="project" value="InterPro"/>
</dbReference>
<dbReference type="GO" id="GO:0006412">
    <property type="term" value="P:translation"/>
    <property type="evidence" value="ECO:0007669"/>
    <property type="project" value="UniProtKB-UniRule"/>
</dbReference>
<dbReference type="CDD" id="cd00427">
    <property type="entry name" value="Ribosomal_L29_HIP"/>
    <property type="match status" value="1"/>
</dbReference>
<dbReference type="Gene3D" id="1.10.287.310">
    <property type="match status" value="1"/>
</dbReference>
<dbReference type="HAMAP" id="MF_00374">
    <property type="entry name" value="Ribosomal_uL29"/>
    <property type="match status" value="1"/>
</dbReference>
<dbReference type="InterPro" id="IPR001854">
    <property type="entry name" value="Ribosomal_uL29"/>
</dbReference>
<dbReference type="InterPro" id="IPR018254">
    <property type="entry name" value="Ribosomal_uL29_CS"/>
</dbReference>
<dbReference type="InterPro" id="IPR036049">
    <property type="entry name" value="Ribosomal_uL29_sf"/>
</dbReference>
<dbReference type="NCBIfam" id="TIGR00012">
    <property type="entry name" value="L29"/>
    <property type="match status" value="1"/>
</dbReference>
<dbReference type="Pfam" id="PF00831">
    <property type="entry name" value="Ribosomal_L29"/>
    <property type="match status" value="1"/>
</dbReference>
<dbReference type="SUPFAM" id="SSF46561">
    <property type="entry name" value="Ribosomal protein L29 (L29p)"/>
    <property type="match status" value="1"/>
</dbReference>
<dbReference type="PROSITE" id="PS00579">
    <property type="entry name" value="RIBOSOMAL_L29"/>
    <property type="match status" value="1"/>
</dbReference>
<evidence type="ECO:0000255" key="1">
    <source>
        <dbReference type="HAMAP-Rule" id="MF_00374"/>
    </source>
</evidence>
<evidence type="ECO:0000305" key="2"/>
<reference key="1">
    <citation type="journal article" date="2005" name="J. Bacteriol.">
        <title>The genome of Sulfolobus acidocaldarius, a model organism of the Crenarchaeota.</title>
        <authorList>
            <person name="Chen L."/>
            <person name="Bruegger K."/>
            <person name="Skovgaard M."/>
            <person name="Redder P."/>
            <person name="She Q."/>
            <person name="Torarinsson E."/>
            <person name="Greve B."/>
            <person name="Awayez M."/>
            <person name="Zibat A."/>
            <person name="Klenk H.-P."/>
            <person name="Garrett R.A."/>
        </authorList>
    </citation>
    <scope>NUCLEOTIDE SEQUENCE [LARGE SCALE GENOMIC DNA]</scope>
    <source>
        <strain>ATCC 33909 / DSM 639 / JCM 8929 / NBRC 15157 / NCIMB 11770</strain>
    </source>
</reference>
<accession>Q4JB47</accession>
<comment type="similarity">
    <text evidence="1">Belongs to the universal ribosomal protein uL29 family.</text>
</comment>
<proteinExistence type="evidence at protein level"/>
<organism>
    <name type="scientific">Sulfolobus acidocaldarius (strain ATCC 33909 / DSM 639 / JCM 8929 / NBRC 15157 / NCIMB 11770)</name>
    <dbReference type="NCBI Taxonomy" id="330779"/>
    <lineage>
        <taxon>Archaea</taxon>
        <taxon>Thermoproteota</taxon>
        <taxon>Thermoprotei</taxon>
        <taxon>Sulfolobales</taxon>
        <taxon>Sulfolobaceae</taxon>
        <taxon>Sulfolobus</taxon>
    </lineage>
</organism>
<keyword id="KW-0002">3D-structure</keyword>
<keyword id="KW-1185">Reference proteome</keyword>
<keyword id="KW-0687">Ribonucleoprotein</keyword>
<keyword id="KW-0689">Ribosomal protein</keyword>
<name>RL29_SULAC</name>
<feature type="chain" id="PRO_0000130523" description="Large ribosomal subunit protein uL29">
    <location>
        <begin position="1"/>
        <end position="69"/>
    </location>
</feature>